<sequence length="472" mass="50374">MSQSLFSQPLNVINVGIAMFSDDLKKQHVEVTQLDWTPPGQGNMQVVQALDNIADSPLADKIAAANQQALERIIQSHPVLIGFDQAINVVPGMTAKTILHAGPPITWEKMCGAMKGAVTGALVFEGLAKDLDEAAELAASGEITFSPCHEHDCVGSMAGVTSASMFMHIVKNKTYGNIAYTNMSEQMAKILRMGANDQSVIDRLNWMRDVQGPILRDAMKIIGEIDLRLMLAQALHMGDECHNRNNAGTTLLIQALTPGIIQAGYSVEQQREVFEFVASSDYFSGPTWMAMCKAAMDAAHGIEYSTVVTTMARNGVEFGLRVSGLPGQWFTGPAQQVIGPMFAGYKPEDSGLDIGDSAITETYGIGGFAMATAPAIVALVGGTVEEAIDFSRQMREITLGENPNVTIPLLGFMGVPSAIDITRVGSSGILPVINTAIAHKDAGVGMIGAGIVHPPFACFEKAILGWCERYGV</sequence>
<gene>
    <name type="primary">yahG</name>
    <name type="ordered locus">b0321</name>
    <name type="ordered locus">JW0313</name>
</gene>
<evidence type="ECO:0000305" key="1"/>
<proteinExistence type="inferred from homology"/>
<feature type="chain" id="PRO_0000168577" description="Uncharacterized protein YahG">
    <location>
        <begin position="1"/>
        <end position="472"/>
    </location>
</feature>
<dbReference type="EMBL" id="U73857">
    <property type="protein sequence ID" value="AAB18047.1"/>
    <property type="molecule type" value="Genomic_DNA"/>
</dbReference>
<dbReference type="EMBL" id="U00096">
    <property type="protein sequence ID" value="AAC73424.1"/>
    <property type="molecule type" value="Genomic_DNA"/>
</dbReference>
<dbReference type="EMBL" id="AP009048">
    <property type="protein sequence ID" value="BAE76104.1"/>
    <property type="molecule type" value="Genomic_DNA"/>
</dbReference>
<dbReference type="PIR" id="A64759">
    <property type="entry name" value="A64759"/>
</dbReference>
<dbReference type="RefSeq" id="NP_414855.1">
    <property type="nucleotide sequence ID" value="NC_000913.3"/>
</dbReference>
<dbReference type="RefSeq" id="WP_000083429.1">
    <property type="nucleotide sequence ID" value="NZ_SSZK01000075.1"/>
</dbReference>
<dbReference type="SMR" id="P77221"/>
<dbReference type="BioGRID" id="4262164">
    <property type="interactions" value="25"/>
</dbReference>
<dbReference type="BioGRID" id="849755">
    <property type="interactions" value="2"/>
</dbReference>
<dbReference type="FunCoup" id="P77221">
    <property type="interactions" value="35"/>
</dbReference>
<dbReference type="IntAct" id="P77221">
    <property type="interactions" value="10"/>
</dbReference>
<dbReference type="STRING" id="511145.b0321"/>
<dbReference type="PaxDb" id="511145-b0321"/>
<dbReference type="EnsemblBacteria" id="AAC73424">
    <property type="protein sequence ID" value="AAC73424"/>
    <property type="gene ID" value="b0321"/>
</dbReference>
<dbReference type="GeneID" id="945379"/>
<dbReference type="KEGG" id="ecj:JW0313"/>
<dbReference type="KEGG" id="eco:b0321"/>
<dbReference type="KEGG" id="ecoc:C3026_01575"/>
<dbReference type="KEGG" id="ecoc:C3026_24745"/>
<dbReference type="PATRIC" id="fig|511145.12.peg.328"/>
<dbReference type="EchoBASE" id="EB3361"/>
<dbReference type="eggNOG" id="COG1304">
    <property type="taxonomic scope" value="Bacteria"/>
</dbReference>
<dbReference type="HOGENOM" id="CLU_036192_0_0_6"/>
<dbReference type="InParanoid" id="P77221"/>
<dbReference type="OrthoDB" id="6193532at2"/>
<dbReference type="PhylomeDB" id="P77221"/>
<dbReference type="BioCyc" id="EcoCyc:G6186-MONOMER"/>
<dbReference type="PRO" id="PR:P77221"/>
<dbReference type="Proteomes" id="UP000000625">
    <property type="component" value="Chromosome"/>
</dbReference>
<dbReference type="Gene3D" id="1.10.10.660">
    <property type="entry name" value="conserved protein of unknown function from Enterococcus faecalis V583"/>
    <property type="match status" value="1"/>
</dbReference>
<dbReference type="Gene3D" id="3.90.1710.10">
    <property type="entry name" value="Enterococcus faecalis V583 domain"/>
    <property type="match status" value="1"/>
</dbReference>
<dbReference type="Gene3D" id="3.40.50.720">
    <property type="entry name" value="NAD(P)-binding Rossmann-like Domain"/>
    <property type="match status" value="1"/>
</dbReference>
<dbReference type="Gene3D" id="3.90.1700.10">
    <property type="entry name" value="v583 domain like"/>
    <property type="match status" value="1"/>
</dbReference>
<dbReference type="InterPro" id="IPR009499">
    <property type="entry name" value="AllG-like"/>
</dbReference>
<dbReference type="InterPro" id="IPR024033">
    <property type="entry name" value="OXTCase_su_AllG_h-dom"/>
</dbReference>
<dbReference type="Pfam" id="PF06545">
    <property type="entry name" value="AllG"/>
    <property type="match status" value="1"/>
</dbReference>
<name>YAHG_ECOLI</name>
<organism>
    <name type="scientific">Escherichia coli (strain K12)</name>
    <dbReference type="NCBI Taxonomy" id="83333"/>
    <lineage>
        <taxon>Bacteria</taxon>
        <taxon>Pseudomonadati</taxon>
        <taxon>Pseudomonadota</taxon>
        <taxon>Gammaproteobacteria</taxon>
        <taxon>Enterobacterales</taxon>
        <taxon>Enterobacteriaceae</taxon>
        <taxon>Escherichia</taxon>
    </lineage>
</organism>
<keyword id="KW-1185">Reference proteome</keyword>
<accession>P77221</accession>
<accession>Q2MCA2</accession>
<comment type="similarity">
    <text evidence="1">Belongs to the AllG family.</text>
</comment>
<reference key="1">
    <citation type="submission" date="1997-01" db="EMBL/GenBank/DDBJ databases">
        <title>Sequence of minutes 4-25 of Escherichia coli.</title>
        <authorList>
            <person name="Chung E."/>
            <person name="Allen E."/>
            <person name="Araujo R."/>
            <person name="Aparicio A.M."/>
            <person name="Davis K."/>
            <person name="Duncan M."/>
            <person name="Federspiel N."/>
            <person name="Hyman R."/>
            <person name="Kalman S."/>
            <person name="Komp C."/>
            <person name="Kurdi O."/>
            <person name="Lew H."/>
            <person name="Lin D."/>
            <person name="Namath A."/>
            <person name="Oefner P."/>
            <person name="Roberts D."/>
            <person name="Schramm S."/>
            <person name="Davis R.W."/>
        </authorList>
    </citation>
    <scope>NUCLEOTIDE SEQUENCE [LARGE SCALE GENOMIC DNA]</scope>
    <source>
        <strain>K12 / MG1655 / ATCC 47076</strain>
    </source>
</reference>
<reference key="2">
    <citation type="journal article" date="1997" name="Science">
        <title>The complete genome sequence of Escherichia coli K-12.</title>
        <authorList>
            <person name="Blattner F.R."/>
            <person name="Plunkett G. III"/>
            <person name="Bloch C.A."/>
            <person name="Perna N.T."/>
            <person name="Burland V."/>
            <person name="Riley M."/>
            <person name="Collado-Vides J."/>
            <person name="Glasner J.D."/>
            <person name="Rode C.K."/>
            <person name="Mayhew G.F."/>
            <person name="Gregor J."/>
            <person name="Davis N.W."/>
            <person name="Kirkpatrick H.A."/>
            <person name="Goeden M.A."/>
            <person name="Rose D.J."/>
            <person name="Mau B."/>
            <person name="Shao Y."/>
        </authorList>
    </citation>
    <scope>NUCLEOTIDE SEQUENCE [LARGE SCALE GENOMIC DNA]</scope>
    <source>
        <strain>K12 / MG1655 / ATCC 47076</strain>
    </source>
</reference>
<reference key="3">
    <citation type="journal article" date="2006" name="Mol. Syst. Biol.">
        <title>Highly accurate genome sequences of Escherichia coli K-12 strains MG1655 and W3110.</title>
        <authorList>
            <person name="Hayashi K."/>
            <person name="Morooka N."/>
            <person name="Yamamoto Y."/>
            <person name="Fujita K."/>
            <person name="Isono K."/>
            <person name="Choi S."/>
            <person name="Ohtsubo E."/>
            <person name="Baba T."/>
            <person name="Wanner B.L."/>
            <person name="Mori H."/>
            <person name="Horiuchi T."/>
        </authorList>
    </citation>
    <scope>NUCLEOTIDE SEQUENCE [LARGE SCALE GENOMIC DNA]</scope>
    <source>
        <strain>K12 / W3110 / ATCC 27325 / DSM 5911</strain>
    </source>
</reference>
<protein>
    <recommendedName>
        <fullName>Uncharacterized protein YahG</fullName>
    </recommendedName>
</protein>